<accession>Q7Q5R5</accession>
<feature type="chain" id="PRO_0000303159" description="Mediator of RNA polymerase II transcription subunit 10">
    <location>
        <begin position="1"/>
        <end position="130"/>
    </location>
</feature>
<protein>
    <recommendedName>
        <fullName>Mediator of RNA polymerase II transcription subunit 10</fullName>
    </recommendedName>
    <alternativeName>
        <fullName>Mediator complex subunit 10</fullName>
    </alternativeName>
</protein>
<dbReference type="EMBL" id="AAAB01008960">
    <property type="protein sequence ID" value="EAA11572.2"/>
    <property type="molecule type" value="Genomic_DNA"/>
</dbReference>
<dbReference type="SMR" id="Q7Q5R5"/>
<dbReference type="FunCoup" id="Q7Q5R5">
    <property type="interactions" value="1358"/>
</dbReference>
<dbReference type="STRING" id="7165.Q7Q5R5"/>
<dbReference type="PaxDb" id="7165-AGAP006248-PA"/>
<dbReference type="EnsemblMetazoa" id="AGAP006248-RA">
    <property type="protein sequence ID" value="AGAP006248-PA"/>
    <property type="gene ID" value="AGAP006248"/>
</dbReference>
<dbReference type="GeneID" id="1276907"/>
<dbReference type="KEGG" id="aga:1276907"/>
<dbReference type="CTD" id="84246"/>
<dbReference type="VEuPathDB" id="VectorBase:AGAMI1_003361"/>
<dbReference type="VEuPathDB" id="VectorBase:AGAP006248"/>
<dbReference type="eggNOG" id="KOG3046">
    <property type="taxonomic scope" value="Eukaryota"/>
</dbReference>
<dbReference type="HOGENOM" id="CLU_096169_3_0_1"/>
<dbReference type="InParanoid" id="Q7Q5R5"/>
<dbReference type="OMA" id="QYQRAKM"/>
<dbReference type="OrthoDB" id="337270at2759"/>
<dbReference type="PhylomeDB" id="Q7Q5R5"/>
<dbReference type="Proteomes" id="UP000007062">
    <property type="component" value="Chromosome 2L"/>
</dbReference>
<dbReference type="GO" id="GO:0016592">
    <property type="term" value="C:mediator complex"/>
    <property type="evidence" value="ECO:0007669"/>
    <property type="project" value="InterPro"/>
</dbReference>
<dbReference type="GO" id="GO:0003712">
    <property type="term" value="F:transcription coregulator activity"/>
    <property type="evidence" value="ECO:0007669"/>
    <property type="project" value="InterPro"/>
</dbReference>
<dbReference type="GO" id="GO:0006357">
    <property type="term" value="P:regulation of transcription by RNA polymerase II"/>
    <property type="evidence" value="ECO:0007669"/>
    <property type="project" value="InterPro"/>
</dbReference>
<dbReference type="InterPro" id="IPR019145">
    <property type="entry name" value="Mediator_Med10"/>
</dbReference>
<dbReference type="PANTHER" id="PTHR13345">
    <property type="entry name" value="MEDIATOR OF RNA POLYMERASE II TRANSCRIPTION SUBUNIT 10"/>
    <property type="match status" value="1"/>
</dbReference>
<dbReference type="PANTHER" id="PTHR13345:SF13">
    <property type="entry name" value="MEDIATOR OF RNA POLYMERASE II TRANSCRIPTION SUBUNIT 10"/>
    <property type="match status" value="1"/>
</dbReference>
<dbReference type="Pfam" id="PF09748">
    <property type="entry name" value="Med10"/>
    <property type="match status" value="1"/>
</dbReference>
<name>MED10_ANOGA</name>
<gene>
    <name type="primary">MED10</name>
    <name type="ORF">AGAP006248</name>
</gene>
<reference key="1">
    <citation type="journal article" date="2002" name="Science">
        <title>The genome sequence of the malaria mosquito Anopheles gambiae.</title>
        <authorList>
            <person name="Holt R.A."/>
            <person name="Subramanian G.M."/>
            <person name="Halpern A."/>
            <person name="Sutton G.G."/>
            <person name="Charlab R."/>
            <person name="Nusskern D.R."/>
            <person name="Wincker P."/>
            <person name="Clark A.G."/>
            <person name="Ribeiro J.M.C."/>
            <person name="Wides R."/>
            <person name="Salzberg S.L."/>
            <person name="Loftus B.J."/>
            <person name="Yandell M.D."/>
            <person name="Majoros W.H."/>
            <person name="Rusch D.B."/>
            <person name="Lai Z."/>
            <person name="Kraft C.L."/>
            <person name="Abril J.F."/>
            <person name="Anthouard V."/>
            <person name="Arensburger P."/>
            <person name="Atkinson P.W."/>
            <person name="Baden H."/>
            <person name="de Berardinis V."/>
            <person name="Baldwin D."/>
            <person name="Benes V."/>
            <person name="Biedler J."/>
            <person name="Blass C."/>
            <person name="Bolanos R."/>
            <person name="Boscus D."/>
            <person name="Barnstead M."/>
            <person name="Cai S."/>
            <person name="Center A."/>
            <person name="Chaturverdi K."/>
            <person name="Christophides G.K."/>
            <person name="Chrystal M.A.M."/>
            <person name="Clamp M."/>
            <person name="Cravchik A."/>
            <person name="Curwen V."/>
            <person name="Dana A."/>
            <person name="Delcher A."/>
            <person name="Dew I."/>
            <person name="Evans C.A."/>
            <person name="Flanigan M."/>
            <person name="Grundschober-Freimoser A."/>
            <person name="Friedli L."/>
            <person name="Gu Z."/>
            <person name="Guan P."/>
            <person name="Guigo R."/>
            <person name="Hillenmeyer M.E."/>
            <person name="Hladun S.L."/>
            <person name="Hogan J.R."/>
            <person name="Hong Y.S."/>
            <person name="Hoover J."/>
            <person name="Jaillon O."/>
            <person name="Ke Z."/>
            <person name="Kodira C.D."/>
            <person name="Kokoza E."/>
            <person name="Koutsos A."/>
            <person name="Letunic I."/>
            <person name="Levitsky A.A."/>
            <person name="Liang Y."/>
            <person name="Lin J.-J."/>
            <person name="Lobo N.F."/>
            <person name="Lopez J.R."/>
            <person name="Malek J.A."/>
            <person name="McIntosh T.C."/>
            <person name="Meister S."/>
            <person name="Miller J.R."/>
            <person name="Mobarry C."/>
            <person name="Mongin E."/>
            <person name="Murphy S.D."/>
            <person name="O'Brochta D.A."/>
            <person name="Pfannkoch C."/>
            <person name="Qi R."/>
            <person name="Regier M.A."/>
            <person name="Remington K."/>
            <person name="Shao H."/>
            <person name="Sharakhova M.V."/>
            <person name="Sitter C.D."/>
            <person name="Shetty J."/>
            <person name="Smith T.J."/>
            <person name="Strong R."/>
            <person name="Sun J."/>
            <person name="Thomasova D."/>
            <person name="Ton L.Q."/>
            <person name="Topalis P."/>
            <person name="Tu Z.J."/>
            <person name="Unger M.F."/>
            <person name="Walenz B."/>
            <person name="Wang A.H."/>
            <person name="Wang J."/>
            <person name="Wang M."/>
            <person name="Wang X."/>
            <person name="Woodford K.J."/>
            <person name="Wortman J.R."/>
            <person name="Wu M."/>
            <person name="Yao A."/>
            <person name="Zdobnov E.M."/>
            <person name="Zhang H."/>
            <person name="Zhao Q."/>
            <person name="Zhao S."/>
            <person name="Zhu S.C."/>
            <person name="Zhimulev I."/>
            <person name="Coluzzi M."/>
            <person name="della Torre A."/>
            <person name="Roth C.W."/>
            <person name="Louis C."/>
            <person name="Kalush F."/>
            <person name="Mural R.J."/>
            <person name="Myers E.W."/>
            <person name="Adams M.D."/>
            <person name="Smith H.O."/>
            <person name="Broder S."/>
            <person name="Gardner M.J."/>
            <person name="Fraser C.M."/>
            <person name="Birney E."/>
            <person name="Bork P."/>
            <person name="Brey P.T."/>
            <person name="Venter J.C."/>
            <person name="Weissenbach J."/>
            <person name="Kafatos F.C."/>
            <person name="Collins F.H."/>
            <person name="Hoffman S.L."/>
        </authorList>
    </citation>
    <scope>NUCLEOTIDE SEQUENCE [LARGE SCALE GENOMIC DNA]</scope>
    <source>
        <strain>PEST</strain>
    </source>
</reference>
<evidence type="ECO:0000250" key="1"/>
<evidence type="ECO:0000305" key="2"/>
<proteinExistence type="inferred from homology"/>
<keyword id="KW-0010">Activator</keyword>
<keyword id="KW-0539">Nucleus</keyword>
<keyword id="KW-1185">Reference proteome</keyword>
<keyword id="KW-0804">Transcription</keyword>
<keyword id="KW-0805">Transcription regulation</keyword>
<organism>
    <name type="scientific">Anopheles gambiae</name>
    <name type="common">African malaria mosquito</name>
    <dbReference type="NCBI Taxonomy" id="7165"/>
    <lineage>
        <taxon>Eukaryota</taxon>
        <taxon>Metazoa</taxon>
        <taxon>Ecdysozoa</taxon>
        <taxon>Arthropoda</taxon>
        <taxon>Hexapoda</taxon>
        <taxon>Insecta</taxon>
        <taxon>Pterygota</taxon>
        <taxon>Neoptera</taxon>
        <taxon>Endopterygota</taxon>
        <taxon>Diptera</taxon>
        <taxon>Nematocera</taxon>
        <taxon>Culicoidea</taxon>
        <taxon>Culicidae</taxon>
        <taxon>Anophelinae</taxon>
        <taxon>Anopheles</taxon>
    </lineage>
</organism>
<sequence>MTSPLENLENHLEMFIENVRQIRIIVSDFQPQGQNVLNQKIQSLVTGLQEIDKLKNQIDVNVPLEVFDYIDQGRNPQLYTKDCIDKALTKNEEVKGKIDSYRKFKSNLMKELSETFPVEISKYKAIRGDE</sequence>
<comment type="function">
    <text evidence="1">Component of the Mediator complex, a coactivator involved in the regulated transcription of nearly all RNA polymerase II-dependent genes. Mediator functions as a bridge to convey information from gene-specific regulatory proteins to the basal RNA polymerase II transcription machinery. Mediator is recruited to promoters by direct interactions with regulatory proteins and serves as a scaffold for the assembly of a functional preinitiation complex with RNA polymerase II and the general transcription factors (By similarity).</text>
</comment>
<comment type="subunit">
    <text evidence="1">Component of the Mediator complex.</text>
</comment>
<comment type="subcellular location">
    <subcellularLocation>
        <location evidence="2">Nucleus</location>
    </subcellularLocation>
</comment>
<comment type="similarity">
    <text evidence="2">Belongs to the Mediator complex subunit 10 family.</text>
</comment>